<organism>
    <name type="scientific">Coccidioides posadasii (strain C735)</name>
    <name type="common">Valley fever fungus</name>
    <dbReference type="NCBI Taxonomy" id="222929"/>
    <lineage>
        <taxon>Eukaryota</taxon>
        <taxon>Fungi</taxon>
        <taxon>Dikarya</taxon>
        <taxon>Ascomycota</taxon>
        <taxon>Pezizomycotina</taxon>
        <taxon>Eurotiomycetes</taxon>
        <taxon>Eurotiomycetidae</taxon>
        <taxon>Onygenales</taxon>
        <taxon>Onygenaceae</taxon>
        <taxon>Coccidioides</taxon>
    </lineage>
</organism>
<evidence type="ECO:0000250" key="1"/>
<evidence type="ECO:0000255" key="2"/>
<evidence type="ECO:0000255" key="3">
    <source>
        <dbReference type="PROSITE-ProRule" id="PRU10095"/>
    </source>
</evidence>
<evidence type="ECO:0000305" key="4"/>
<comment type="function">
    <text evidence="1">Secreted metalloproteinase that allows assimilation of proteinaceous substrates. Shows high activities on basic nuclear substrates such as histone and protamine. May be involved in virulence (By similarity).</text>
</comment>
<comment type="catalytic activity">
    <reaction>
        <text>Preferential cleavage of bonds with hydrophobic residues in P1'. Also 3-Asn-|-Gln-4 and 8-Gly-|-Ser-9 bonds in insulin B chain.</text>
        <dbReference type="EC" id="3.4.24.39"/>
    </reaction>
</comment>
<comment type="cofactor">
    <cofactor evidence="1">
        <name>Zn(2+)</name>
        <dbReference type="ChEBI" id="CHEBI:29105"/>
    </cofactor>
    <text evidence="1">Binds 1 zinc ion per subunit.</text>
</comment>
<comment type="subcellular location">
    <subcellularLocation>
        <location evidence="1">Secreted</location>
    </subcellularLocation>
</comment>
<comment type="similarity">
    <text evidence="4">Belongs to the peptidase M35 family.</text>
</comment>
<comment type="sequence caution" evidence="4">
    <conflict type="erroneous gene model prediction">
        <sequence resource="EMBL-CDS" id="AAY45756"/>
    </conflict>
</comment>
<gene>
    <name type="primary">MEP6</name>
    <name type="ORF">CPC735_019360</name>
</gene>
<feature type="signal peptide" evidence="2">
    <location>
        <begin position="1"/>
        <end position="19"/>
    </location>
</feature>
<feature type="propeptide" id="PRO_0000407074" evidence="1">
    <location>
        <begin position="20"/>
        <end position="179"/>
    </location>
</feature>
<feature type="chain" id="PRO_0000407075" description="Neutral protease 2 homolog MEP6">
    <location>
        <begin position="180"/>
        <end position="355"/>
    </location>
</feature>
<feature type="active site" evidence="3">
    <location>
        <position position="308"/>
    </location>
</feature>
<feature type="binding site" evidence="3">
    <location>
        <position position="307"/>
    </location>
    <ligand>
        <name>Zn(2+)</name>
        <dbReference type="ChEBI" id="CHEBI:29105"/>
        <note>catalytic</note>
    </ligand>
</feature>
<feature type="binding site" evidence="3">
    <location>
        <position position="311"/>
    </location>
    <ligand>
        <name>Zn(2+)</name>
        <dbReference type="ChEBI" id="CHEBI:29105"/>
        <note>catalytic</note>
    </ligand>
</feature>
<feature type="binding site" evidence="3">
    <location>
        <position position="322"/>
    </location>
    <ligand>
        <name>Zn(2+)</name>
        <dbReference type="ChEBI" id="CHEBI:29105"/>
        <note>catalytic</note>
    </ligand>
</feature>
<feature type="disulfide bond" evidence="1">
    <location>
        <begin position="187"/>
        <end position="259"/>
    </location>
</feature>
<feature type="disulfide bond" evidence="1">
    <location>
        <begin position="266"/>
        <end position="283"/>
    </location>
</feature>
<reference key="1">
    <citation type="journal article" date="2005" name="Infect. Immun.">
        <title>A metalloproteinase of Coccidioides posadasii contributes to evasion of host detection.</title>
        <authorList>
            <person name="Hung C.Y."/>
            <person name="Seshan K.R."/>
            <person name="Yu J.J."/>
            <person name="Schaller R."/>
            <person name="Xue J."/>
            <person name="Basrur V."/>
            <person name="Gardner M.J."/>
            <person name="Cole G.T."/>
        </authorList>
    </citation>
    <scope>NUCLEOTIDE SEQUENCE [GENOMIC DNA]</scope>
    <source>
        <strain>C735</strain>
    </source>
</reference>
<reference key="2">
    <citation type="journal article" date="2009" name="Genome Res.">
        <title>Comparative genomic analyses of the human fungal pathogens Coccidioides and their relatives.</title>
        <authorList>
            <person name="Sharpton T.J."/>
            <person name="Stajich J.E."/>
            <person name="Rounsley S.D."/>
            <person name="Gardner M.J."/>
            <person name="Wortman J.R."/>
            <person name="Jordar V.S."/>
            <person name="Maiti R."/>
            <person name="Kodira C.D."/>
            <person name="Neafsey D.E."/>
            <person name="Zeng Q."/>
            <person name="Hung C.-Y."/>
            <person name="McMahan C."/>
            <person name="Muszewska A."/>
            <person name="Grynberg M."/>
            <person name="Mandel M.A."/>
            <person name="Kellner E.M."/>
            <person name="Barker B.M."/>
            <person name="Galgiani J.N."/>
            <person name="Orbach M.J."/>
            <person name="Kirkland T.N."/>
            <person name="Cole G.T."/>
            <person name="Henn M.R."/>
            <person name="Birren B.W."/>
            <person name="Taylor J.W."/>
        </authorList>
    </citation>
    <scope>NUCLEOTIDE SEQUENCE [LARGE SCALE GENOMIC DNA]</scope>
    <source>
        <strain>C735</strain>
    </source>
</reference>
<keyword id="KW-0165">Cleavage on pair of basic residues</keyword>
<keyword id="KW-1015">Disulfide bond</keyword>
<keyword id="KW-0378">Hydrolase</keyword>
<keyword id="KW-0479">Metal-binding</keyword>
<keyword id="KW-0482">Metalloprotease</keyword>
<keyword id="KW-0645">Protease</keyword>
<keyword id="KW-0964">Secreted</keyword>
<keyword id="KW-0732">Signal</keyword>
<keyword id="KW-0843">Virulence</keyword>
<keyword id="KW-0862">Zinc</keyword>
<keyword id="KW-0865">Zymogen</keyword>
<sequence length="355" mass="38657">MRLSSSLIALVALAGQALALPFNELAERDTGLDVKLIPIGNTRVKAIITNNADHEMSFVKYNTLFDSSPVRKVQISKDGSIIPFKGIHLYYDIDNLPKEAYKTLAPGASAEAEFDIAETSDLSAGGSFKISAEGSIPVIDGQGTKPTSSIRFKANTLTMDIDGEMASRVASAIPELNKRTRVDNQTCTGQYAQLLQGGLRTCATYAQRAAQAASGGNAQKFQEYFKTTNQQTRQNVARRFQAIAQECSSANQGRTIYFCQDVYGYCQGAIAYTVPDRSHVVNCPAYWSLPPVLNRGLGPDHGYVIVHEFTHAPSVFSPGTVDHAYGYEQCRRLNAQQSLNNADSYSLFAADVSRN</sequence>
<name>MEP6_COCP7</name>
<proteinExistence type="inferred from homology"/>
<protein>
    <recommendedName>
        <fullName>Neutral protease 2 homolog MEP6</fullName>
        <ecNumber>3.4.24.39</ecNumber>
    </recommendedName>
    <alternativeName>
        <fullName>Deuterolysin MEP6</fullName>
    </alternativeName>
    <alternativeName>
        <fullName>Metalloproteinase 6</fullName>
    </alternativeName>
</protein>
<accession>C5PE18</accession>
<accession>Q3KRQ7</accession>
<dbReference type="EC" id="3.4.24.39"/>
<dbReference type="EMBL" id="AY987810">
    <property type="protein sequence ID" value="AAY45756.1"/>
    <property type="status" value="ALT_SEQ"/>
    <property type="molecule type" value="Genomic_DNA"/>
</dbReference>
<dbReference type="EMBL" id="ACFW01000043">
    <property type="protein sequence ID" value="EER25329.1"/>
    <property type="molecule type" value="Genomic_DNA"/>
</dbReference>
<dbReference type="RefSeq" id="XP_003067474.1">
    <property type="nucleotide sequence ID" value="XM_003067428.1"/>
</dbReference>
<dbReference type="SMR" id="C5PE18"/>
<dbReference type="GeneID" id="9692945"/>
<dbReference type="KEGG" id="cpw:9692945"/>
<dbReference type="VEuPathDB" id="FungiDB:CPC735_019360"/>
<dbReference type="HOGENOM" id="CLU_039313_1_1_1"/>
<dbReference type="OrthoDB" id="412874at2759"/>
<dbReference type="BRENDA" id="3.4.24.39">
    <property type="organism ID" value="9184"/>
</dbReference>
<dbReference type="Proteomes" id="UP000009084">
    <property type="component" value="Unassembled WGS sequence"/>
</dbReference>
<dbReference type="GO" id="GO:0005576">
    <property type="term" value="C:extracellular region"/>
    <property type="evidence" value="ECO:0007669"/>
    <property type="project" value="UniProtKB-SubCell"/>
</dbReference>
<dbReference type="GO" id="GO:0046872">
    <property type="term" value="F:metal ion binding"/>
    <property type="evidence" value="ECO:0007669"/>
    <property type="project" value="UniProtKB-KW"/>
</dbReference>
<dbReference type="GO" id="GO:0004222">
    <property type="term" value="F:metalloendopeptidase activity"/>
    <property type="evidence" value="ECO:0007669"/>
    <property type="project" value="InterPro"/>
</dbReference>
<dbReference type="GO" id="GO:0006508">
    <property type="term" value="P:proteolysis"/>
    <property type="evidence" value="ECO:0007669"/>
    <property type="project" value="UniProtKB-KW"/>
</dbReference>
<dbReference type="CDD" id="cd11008">
    <property type="entry name" value="M35_deuterolysin_like"/>
    <property type="match status" value="1"/>
</dbReference>
<dbReference type="Gene3D" id="2.60.40.2970">
    <property type="match status" value="1"/>
</dbReference>
<dbReference type="Gene3D" id="3.40.390.10">
    <property type="entry name" value="Collagenase (Catalytic Domain)"/>
    <property type="match status" value="1"/>
</dbReference>
<dbReference type="InterPro" id="IPR050414">
    <property type="entry name" value="Fungal_M35_metalloproteases"/>
</dbReference>
<dbReference type="InterPro" id="IPR029463">
    <property type="entry name" value="Lys_MEP"/>
</dbReference>
<dbReference type="InterPro" id="IPR024079">
    <property type="entry name" value="MetalloPept_cat_dom_sf"/>
</dbReference>
<dbReference type="InterPro" id="IPR001384">
    <property type="entry name" value="Peptidase_M35"/>
</dbReference>
<dbReference type="PANTHER" id="PTHR37016">
    <property type="match status" value="1"/>
</dbReference>
<dbReference type="PANTHER" id="PTHR37016:SF3">
    <property type="entry name" value="NEUTRAL PROTEASE 2-RELATED"/>
    <property type="match status" value="1"/>
</dbReference>
<dbReference type="Pfam" id="PF02102">
    <property type="entry name" value="Peptidase_M35"/>
    <property type="match status" value="1"/>
</dbReference>
<dbReference type="PRINTS" id="PR00768">
    <property type="entry name" value="DEUTEROLYSIN"/>
</dbReference>
<dbReference type="SMART" id="SM01351">
    <property type="entry name" value="Aspzincin_M35"/>
    <property type="match status" value="1"/>
</dbReference>
<dbReference type="SUPFAM" id="SSF55486">
    <property type="entry name" value="Metalloproteases ('zincins'), catalytic domain"/>
    <property type="match status" value="1"/>
</dbReference>
<dbReference type="PROSITE" id="PS00142">
    <property type="entry name" value="ZINC_PROTEASE"/>
    <property type="match status" value="1"/>
</dbReference>